<feature type="signal peptide" evidence="1">
    <location>
        <begin position="1"/>
        <end position="21"/>
    </location>
</feature>
<feature type="chain" id="PRO_1000123959" description="Flagellar L-ring protein">
    <location>
        <begin position="22"/>
        <end position="232"/>
    </location>
</feature>
<feature type="lipid moiety-binding region" description="N-palmitoyl cysteine" evidence="1">
    <location>
        <position position="22"/>
    </location>
</feature>
<feature type="lipid moiety-binding region" description="S-diacylglycerol cysteine" evidence="1">
    <location>
        <position position="22"/>
    </location>
</feature>
<organism>
    <name type="scientific">Shigella boydii serotype 18 (strain CDC 3083-94 / BS512)</name>
    <dbReference type="NCBI Taxonomy" id="344609"/>
    <lineage>
        <taxon>Bacteria</taxon>
        <taxon>Pseudomonadati</taxon>
        <taxon>Pseudomonadota</taxon>
        <taxon>Gammaproteobacteria</taxon>
        <taxon>Enterobacterales</taxon>
        <taxon>Enterobacteriaceae</taxon>
        <taxon>Shigella</taxon>
    </lineage>
</organism>
<gene>
    <name evidence="1" type="primary">flgH</name>
    <name type="ordered locus">SbBS512_E2246</name>
</gene>
<dbReference type="EMBL" id="CP001063">
    <property type="protein sequence ID" value="ACD07790.1"/>
    <property type="molecule type" value="Genomic_DNA"/>
</dbReference>
<dbReference type="RefSeq" id="WP_012421384.1">
    <property type="nucleotide sequence ID" value="NC_010658.1"/>
</dbReference>
<dbReference type="SMR" id="B2U541"/>
<dbReference type="STRING" id="344609.SbBS512_E2246"/>
<dbReference type="KEGG" id="sbc:SbBS512_E2246"/>
<dbReference type="HOGENOM" id="CLU_069313_0_0_6"/>
<dbReference type="Proteomes" id="UP000001030">
    <property type="component" value="Chromosome"/>
</dbReference>
<dbReference type="GO" id="GO:0009427">
    <property type="term" value="C:bacterial-type flagellum basal body, distal rod, L ring"/>
    <property type="evidence" value="ECO:0007669"/>
    <property type="project" value="InterPro"/>
</dbReference>
<dbReference type="GO" id="GO:0009279">
    <property type="term" value="C:cell outer membrane"/>
    <property type="evidence" value="ECO:0007669"/>
    <property type="project" value="UniProtKB-SubCell"/>
</dbReference>
<dbReference type="GO" id="GO:0003774">
    <property type="term" value="F:cytoskeletal motor activity"/>
    <property type="evidence" value="ECO:0007669"/>
    <property type="project" value="InterPro"/>
</dbReference>
<dbReference type="GO" id="GO:0071973">
    <property type="term" value="P:bacterial-type flagellum-dependent cell motility"/>
    <property type="evidence" value="ECO:0007669"/>
    <property type="project" value="InterPro"/>
</dbReference>
<dbReference type="HAMAP" id="MF_00415">
    <property type="entry name" value="FlgH"/>
    <property type="match status" value="1"/>
</dbReference>
<dbReference type="InterPro" id="IPR000527">
    <property type="entry name" value="Flag_Lring"/>
</dbReference>
<dbReference type="PANTHER" id="PTHR34933">
    <property type="entry name" value="FLAGELLAR L-RING PROTEIN"/>
    <property type="match status" value="1"/>
</dbReference>
<dbReference type="PANTHER" id="PTHR34933:SF3">
    <property type="entry name" value="FLAGELLAR L-RING PROTEIN"/>
    <property type="match status" value="1"/>
</dbReference>
<dbReference type="Pfam" id="PF02107">
    <property type="entry name" value="FlgH"/>
    <property type="match status" value="1"/>
</dbReference>
<dbReference type="PRINTS" id="PR01008">
    <property type="entry name" value="FLGLRINGFLGH"/>
</dbReference>
<dbReference type="PROSITE" id="PS51257">
    <property type="entry name" value="PROKAR_LIPOPROTEIN"/>
    <property type="match status" value="1"/>
</dbReference>
<sequence length="232" mass="24662">MQKNAAHTYAISSLLVLSLTGCAWIPSTPLVQGATSAQPVPGPTPVANGSIFQSAQPINYGYQPLFEDRRPRNIGDTLTIVLQENVSASKSSSVNASRDGKTNFGFDTVPRYLQGLFGNARADVEASGGNTFNGKGGANASNTFSGTLTVTVDQVLVNGNLHVVGEKQIAINQGTEFIRFSGVVNPRTISGSNTVSSTQVVDARIEYVGNGYINEAQNMGWLQRFFLNLSPM</sequence>
<accession>B2U541</accession>
<name>FLGH_SHIB3</name>
<reference key="1">
    <citation type="submission" date="2008-05" db="EMBL/GenBank/DDBJ databases">
        <title>Complete sequence of Shigella boydii serotype 18 strain BS512.</title>
        <authorList>
            <person name="Rasko D.A."/>
            <person name="Rosovitz M."/>
            <person name="Maurelli A.T."/>
            <person name="Myers G."/>
            <person name="Seshadri R."/>
            <person name="Cer R."/>
            <person name="Jiang L."/>
            <person name="Ravel J."/>
            <person name="Sebastian Y."/>
        </authorList>
    </citation>
    <scope>NUCLEOTIDE SEQUENCE [LARGE SCALE GENOMIC DNA]</scope>
    <source>
        <strain>CDC 3083-94 / BS512</strain>
    </source>
</reference>
<keyword id="KW-0975">Bacterial flagellum</keyword>
<keyword id="KW-0998">Cell outer membrane</keyword>
<keyword id="KW-0449">Lipoprotein</keyword>
<keyword id="KW-0472">Membrane</keyword>
<keyword id="KW-0564">Palmitate</keyword>
<keyword id="KW-1185">Reference proteome</keyword>
<keyword id="KW-0732">Signal</keyword>
<comment type="function">
    <text evidence="1">Assembles around the rod to form the L-ring and probably protects the motor/basal body from shearing forces during rotation.</text>
</comment>
<comment type="subunit">
    <text evidence="1">The basal body constitutes a major portion of the flagellar organelle and consists of four rings (L,P,S, and M) mounted on a central rod.</text>
</comment>
<comment type="subcellular location">
    <subcellularLocation>
        <location evidence="1">Cell outer membrane</location>
        <topology evidence="1">Lipid-anchor</topology>
    </subcellularLocation>
    <subcellularLocation>
        <location evidence="1">Bacterial flagellum basal body</location>
    </subcellularLocation>
</comment>
<comment type="similarity">
    <text evidence="1">Belongs to the FlgH family.</text>
</comment>
<proteinExistence type="inferred from homology"/>
<evidence type="ECO:0000255" key="1">
    <source>
        <dbReference type="HAMAP-Rule" id="MF_00415"/>
    </source>
</evidence>
<protein>
    <recommendedName>
        <fullName evidence="1">Flagellar L-ring protein</fullName>
    </recommendedName>
    <alternativeName>
        <fullName evidence="1">Basal body L-ring protein</fullName>
    </alternativeName>
</protein>